<evidence type="ECO:0000250" key="1">
    <source>
        <dbReference type="UniProtKB" id="Q05502"/>
    </source>
</evidence>
<evidence type="ECO:0000255" key="2"/>
<evidence type="ECO:0000255" key="3">
    <source>
        <dbReference type="PROSITE-ProRule" id="PRU00108"/>
    </source>
</evidence>
<evidence type="ECO:0000256" key="4">
    <source>
        <dbReference type="SAM" id="MobiDB-lite"/>
    </source>
</evidence>
<evidence type="ECO:0000269" key="5">
    <source>
    </source>
</evidence>
<evidence type="ECO:0000269" key="6">
    <source>
    </source>
</evidence>
<evidence type="ECO:0000269" key="7">
    <source>
    </source>
</evidence>
<evidence type="ECO:0000269" key="8">
    <source>
    </source>
</evidence>
<evidence type="ECO:0000269" key="9">
    <source>
    </source>
</evidence>
<evidence type="ECO:0000303" key="10">
    <source>
    </source>
</evidence>
<evidence type="ECO:0000305" key="11"/>
<evidence type="ECO:0000312" key="12">
    <source>
        <dbReference type="EMBL" id="AAF28383.1"/>
    </source>
</evidence>
<reference evidence="11 12" key="1">
    <citation type="journal article" date="1999" name="Curr. Biol.">
        <title>A role for the extraembryonic yolk syncytial layer in patterning the zebrafish embryo suggested by properties of the hex gene.</title>
        <authorList>
            <person name="Ho C.-Y."/>
            <person name="Houart C."/>
            <person name="Wilson S.W."/>
            <person name="Stainier D.Y.R."/>
        </authorList>
    </citation>
    <scope>NUCLEOTIDE SEQUENCE [MRNA]</scope>
    <scope>FUNCTION</scope>
    <scope>TISSUE SPECIFICITY</scope>
    <source>
        <tissue evidence="5">Pharyngula</tissue>
    </source>
</reference>
<reference evidence="11" key="2">
    <citation type="journal article" date="2000" name="Development">
        <title>Hhex and scl function in parallel to regulate early endothelial and blood differentiation in zebrafish.</title>
        <authorList>
            <person name="Liao W."/>
            <person name="Ho C.-Y."/>
            <person name="Yan Y.L."/>
            <person name="Postlethwait J.H."/>
            <person name="Stainier D.Y.R."/>
        </authorList>
    </citation>
    <scope>FUNCTION</scope>
    <scope>TISSUE SPECIFICITY</scope>
</reference>
<reference evidence="11" key="3">
    <citation type="journal article" date="2001" name="Genesis">
        <title>Zebrafish hhex regulates liver development and digestive organ chirality.</title>
        <authorList>
            <person name="Wallace K.N."/>
            <person name="Yusuff S."/>
            <person name="Sonntag J.M."/>
            <person name="Chin A.J."/>
            <person name="Pack M."/>
        </authorList>
    </citation>
    <scope>FUNCTION</scope>
</reference>
<reference evidence="11" key="4">
    <citation type="journal article" date="2003" name="Dev. Biol.">
        <title>Zebrafish hhex, nk2.1a, and pax2.1 regulate thyroid growth and differentiation downstream of Nodal-dependent transcription factors.</title>
        <authorList>
            <person name="Elsalini O.A."/>
            <person name="von Gartzen J."/>
            <person name="Cramer M."/>
            <person name="Rohr K.B."/>
        </authorList>
    </citation>
    <scope>FUNCTION</scope>
    <scope>TISSUE SPECIFICITY</scope>
</reference>
<reference evidence="11" key="5">
    <citation type="journal article" date="2004" name="Dev. Biol.">
        <title>Regulation of hhex expression in the yolk syncytial layer, the potential Nieuwkoop center homolog in zebrafish.</title>
        <authorList>
            <person name="Bischof J."/>
            <person name="Driever W."/>
        </authorList>
    </citation>
    <scope>INDUCTION</scope>
</reference>
<comment type="function">
    <text evidence="1 5 6 7 8">Recognizes the DNA sequence 5'-ATTAA-3' (By similarity). Transcriptional repressor. Regulates the differentiation of both endothelial and blood cells. Plays a role in embryonic dorsoventral patterning by regulating bmp expression. May establish anterior identity. Functions in the embryo to regulate liver development. Functions extraembryonically to generate organ chirality.</text>
</comment>
<comment type="subcellular location">
    <subcellularLocation>
        <location evidence="2 11">Nucleus</location>
    </subcellularLocation>
</comment>
<comment type="tissue specificity">
    <text evidence="5 6 8">Expressed in embryonic endothelial and blood lineages. From late-blastula stage, expression is restricted to the dorsal marginal region of the extraembryonic yolk syncytial layer (YSL). By the onset of gastrulation, expressed in the entire dorsal half of the YSL. Post-gastrulation, expression appears in both anterior and posterior lateral plate mesoderm by the 3-somite stage. Posteriorly, expression is in the intermediate cell mass (ICM), which contains both endothelial and blood precursors. Subsequently expressed in the developing endothelial cells including the endocardium until the onset of circulation (24 hpf) and disappears completely by 30 hpf, at which point expression is seen in the thyroid and liver primordia. Also expressed in the developing biliary tree and pancreas.</text>
</comment>
<comment type="induction">
    <text evidence="9">By dhama/boz downstream of canonical wnt-signaling.</text>
</comment>
<protein>
    <recommendedName>
        <fullName>Hematopoietically-expressed homeobox protein hhex</fullName>
        <shortName>Homeobox protein hex</shortName>
    </recommendedName>
</protein>
<keyword id="KW-0217">Developmental protein</keyword>
<keyword id="KW-0238">DNA-binding</keyword>
<keyword id="KW-0371">Homeobox</keyword>
<keyword id="KW-0539">Nucleus</keyword>
<keyword id="KW-1185">Reference proteome</keyword>
<keyword id="KW-0678">Repressor</keyword>
<keyword id="KW-0804">Transcription</keyword>
<keyword id="KW-0805">Transcription regulation</keyword>
<proteinExistence type="evidence at transcript level"/>
<accession>Q9IAV3</accession>
<gene>
    <name evidence="12" type="primary">hhex</name>
    <name evidence="10" type="synonym">hex</name>
</gene>
<dbReference type="EMBL" id="AF131070">
    <property type="protein sequence ID" value="AAF28383.1"/>
    <property type="molecule type" value="mRNA"/>
</dbReference>
<dbReference type="RefSeq" id="NP_571009.1">
    <property type="nucleotide sequence ID" value="NM_130934.1"/>
</dbReference>
<dbReference type="SMR" id="Q9IAV3"/>
<dbReference type="FunCoup" id="Q9IAV3">
    <property type="interactions" value="217"/>
</dbReference>
<dbReference type="STRING" id="7955.ENSDARP00000137249"/>
<dbReference type="GeneID" id="30098"/>
<dbReference type="KEGG" id="dre:30098"/>
<dbReference type="AGR" id="ZFIN:ZDB-GENE-980526-299"/>
<dbReference type="CTD" id="3087"/>
<dbReference type="ZFIN" id="ZDB-GENE-980526-299">
    <property type="gene designation" value="hhex"/>
</dbReference>
<dbReference type="InParanoid" id="Q9IAV3"/>
<dbReference type="OrthoDB" id="6159439at2759"/>
<dbReference type="PhylomeDB" id="Q9IAV3"/>
<dbReference type="PRO" id="PR:Q9IAV3"/>
<dbReference type="Proteomes" id="UP000000437">
    <property type="component" value="Chromosome 12"/>
</dbReference>
<dbReference type="GO" id="GO:0005634">
    <property type="term" value="C:nucleus"/>
    <property type="evidence" value="ECO:0000250"/>
    <property type="project" value="UniProtKB"/>
</dbReference>
<dbReference type="GO" id="GO:0000981">
    <property type="term" value="F:DNA-binding transcription factor activity, RNA polymerase II-specific"/>
    <property type="evidence" value="ECO:0007669"/>
    <property type="project" value="InterPro"/>
</dbReference>
<dbReference type="GO" id="GO:0000978">
    <property type="term" value="F:RNA polymerase II cis-regulatory region sequence-specific DNA binding"/>
    <property type="evidence" value="ECO:0000318"/>
    <property type="project" value="GO_Central"/>
</dbReference>
<dbReference type="GO" id="GO:0043565">
    <property type="term" value="F:sequence-specific DNA binding"/>
    <property type="evidence" value="ECO:0000250"/>
    <property type="project" value="UniProtKB"/>
</dbReference>
<dbReference type="GO" id="GO:0009952">
    <property type="term" value="P:anterior/posterior pattern specification"/>
    <property type="evidence" value="ECO:0000250"/>
    <property type="project" value="UniProtKB"/>
</dbReference>
<dbReference type="GO" id="GO:0030154">
    <property type="term" value="P:cell differentiation"/>
    <property type="evidence" value="ECO:0000318"/>
    <property type="project" value="GO_Central"/>
</dbReference>
<dbReference type="GO" id="GO:0007368">
    <property type="term" value="P:determination of left/right symmetry"/>
    <property type="evidence" value="ECO:0000315"/>
    <property type="project" value="UniProtKB"/>
</dbReference>
<dbReference type="GO" id="GO:0048565">
    <property type="term" value="P:digestive tract development"/>
    <property type="evidence" value="ECO:0000315"/>
    <property type="project" value="UniProtKB"/>
</dbReference>
<dbReference type="GO" id="GO:0009953">
    <property type="term" value="P:dorsal/ventral pattern formation"/>
    <property type="evidence" value="ECO:0000315"/>
    <property type="project" value="UniProtKB"/>
</dbReference>
<dbReference type="GO" id="GO:0035162">
    <property type="term" value="P:embryonic hemopoiesis"/>
    <property type="evidence" value="ECO:0000315"/>
    <property type="project" value="UniProtKB"/>
</dbReference>
<dbReference type="GO" id="GO:0031017">
    <property type="term" value="P:exocrine pancreas development"/>
    <property type="evidence" value="ECO:0000315"/>
    <property type="project" value="ZFIN"/>
</dbReference>
<dbReference type="GO" id="GO:0007507">
    <property type="term" value="P:heart development"/>
    <property type="evidence" value="ECO:0000315"/>
    <property type="project" value="ZFIN"/>
</dbReference>
<dbReference type="GO" id="GO:0061008">
    <property type="term" value="P:hepaticobiliary system development"/>
    <property type="evidence" value="ECO:0000315"/>
    <property type="project" value="ZFIN"/>
</dbReference>
<dbReference type="GO" id="GO:0001889">
    <property type="term" value="P:liver development"/>
    <property type="evidence" value="ECO:0000315"/>
    <property type="project" value="UniProtKB"/>
</dbReference>
<dbReference type="GO" id="GO:0072576">
    <property type="term" value="P:liver morphogenesis"/>
    <property type="evidence" value="ECO:0000315"/>
    <property type="project" value="ZFIN"/>
</dbReference>
<dbReference type="GO" id="GO:0001946">
    <property type="term" value="P:lymphangiogenesis"/>
    <property type="evidence" value="ECO:0000315"/>
    <property type="project" value="ZFIN"/>
</dbReference>
<dbReference type="GO" id="GO:0045892">
    <property type="term" value="P:negative regulation of DNA-templated transcription"/>
    <property type="evidence" value="ECO:0000314"/>
    <property type="project" value="UniProtKB"/>
</dbReference>
<dbReference type="GO" id="GO:0000122">
    <property type="term" value="P:negative regulation of transcription by RNA polymerase II"/>
    <property type="evidence" value="ECO:0000314"/>
    <property type="project" value="UniProtKB"/>
</dbReference>
<dbReference type="GO" id="GO:0045603">
    <property type="term" value="P:positive regulation of endothelial cell differentiation"/>
    <property type="evidence" value="ECO:0000315"/>
    <property type="project" value="ZFIN"/>
</dbReference>
<dbReference type="GO" id="GO:0046620">
    <property type="term" value="P:regulation of organ growth"/>
    <property type="evidence" value="ECO:0000315"/>
    <property type="project" value="ZFIN"/>
</dbReference>
<dbReference type="GO" id="GO:0006357">
    <property type="term" value="P:regulation of transcription by RNA polymerase II"/>
    <property type="evidence" value="ECO:0000318"/>
    <property type="project" value="GO_Central"/>
</dbReference>
<dbReference type="GO" id="GO:0002040">
    <property type="term" value="P:sprouting angiogenesis"/>
    <property type="evidence" value="ECO:0000315"/>
    <property type="project" value="ZFIN"/>
</dbReference>
<dbReference type="GO" id="GO:0030878">
    <property type="term" value="P:thyroid gland development"/>
    <property type="evidence" value="ECO:0000315"/>
    <property type="project" value="ZFIN"/>
</dbReference>
<dbReference type="CDD" id="cd00086">
    <property type="entry name" value="homeodomain"/>
    <property type="match status" value="1"/>
</dbReference>
<dbReference type="FunFam" id="1.10.10.60:FF:000178">
    <property type="entry name" value="hematopoietically-expressed homeobox protein HHEX"/>
    <property type="match status" value="1"/>
</dbReference>
<dbReference type="Gene3D" id="1.10.10.60">
    <property type="entry name" value="Homeodomain-like"/>
    <property type="match status" value="1"/>
</dbReference>
<dbReference type="InterPro" id="IPR001356">
    <property type="entry name" value="HD"/>
</dbReference>
<dbReference type="InterPro" id="IPR020479">
    <property type="entry name" value="HD_metazoa"/>
</dbReference>
<dbReference type="InterPro" id="IPR017970">
    <property type="entry name" value="Homeobox_CS"/>
</dbReference>
<dbReference type="InterPro" id="IPR051000">
    <property type="entry name" value="Homeobox_DNA-bind_prot"/>
</dbReference>
<dbReference type="InterPro" id="IPR009057">
    <property type="entry name" value="Homeodomain-like_sf"/>
</dbReference>
<dbReference type="PANTHER" id="PTHR24324:SF5">
    <property type="entry name" value="HEMATOPOIETICALLY-EXPRESSED HOMEOBOX PROTEIN HHEX"/>
    <property type="match status" value="1"/>
</dbReference>
<dbReference type="PANTHER" id="PTHR24324">
    <property type="entry name" value="HOMEOBOX PROTEIN HHEX"/>
    <property type="match status" value="1"/>
</dbReference>
<dbReference type="Pfam" id="PF00046">
    <property type="entry name" value="Homeodomain"/>
    <property type="match status" value="1"/>
</dbReference>
<dbReference type="PRINTS" id="PR00024">
    <property type="entry name" value="HOMEOBOX"/>
</dbReference>
<dbReference type="SMART" id="SM00389">
    <property type="entry name" value="HOX"/>
    <property type="match status" value="1"/>
</dbReference>
<dbReference type="SUPFAM" id="SSF46689">
    <property type="entry name" value="Homeodomain-like"/>
    <property type="match status" value="1"/>
</dbReference>
<dbReference type="PROSITE" id="PS00027">
    <property type="entry name" value="HOMEOBOX_1"/>
    <property type="match status" value="1"/>
</dbReference>
<dbReference type="PROSITE" id="PS50071">
    <property type="entry name" value="HOMEOBOX_2"/>
    <property type="match status" value="1"/>
</dbReference>
<organism>
    <name type="scientific">Danio rerio</name>
    <name type="common">Zebrafish</name>
    <name type="synonym">Brachydanio rerio</name>
    <dbReference type="NCBI Taxonomy" id="7955"/>
    <lineage>
        <taxon>Eukaryota</taxon>
        <taxon>Metazoa</taxon>
        <taxon>Chordata</taxon>
        <taxon>Craniata</taxon>
        <taxon>Vertebrata</taxon>
        <taxon>Euteleostomi</taxon>
        <taxon>Actinopterygii</taxon>
        <taxon>Neopterygii</taxon>
        <taxon>Teleostei</taxon>
        <taxon>Ostariophysi</taxon>
        <taxon>Cypriniformes</taxon>
        <taxon>Danionidae</taxon>
        <taxon>Danioninae</taxon>
        <taxon>Danio</taxon>
    </lineage>
</organism>
<feature type="chain" id="PRO_0000326219" description="Hematopoietically-expressed homeobox protein hhex">
    <location>
        <begin position="1"/>
        <end position="228"/>
    </location>
</feature>
<feature type="DNA-binding region" description="Homeobox" evidence="3">
    <location>
        <begin position="117"/>
        <end position="176"/>
    </location>
</feature>
<feature type="region of interest" description="Disordered" evidence="4">
    <location>
        <begin position="175"/>
        <end position="228"/>
    </location>
</feature>
<feature type="compositionally biased region" description="Basic and acidic residues" evidence="4">
    <location>
        <begin position="184"/>
        <end position="207"/>
    </location>
</feature>
<feature type="compositionally biased region" description="Acidic residues" evidence="4">
    <location>
        <begin position="213"/>
        <end position="222"/>
    </location>
</feature>
<name>HHEX_DANRE</name>
<sequence>MQFQHPHAPLYAPAPAPPAHPTPFYIEDILGRTGSSSGPVVPTPTLPSPNSSFTSLIPSYRTPIYELTPIHPVLSQYASMYPFQRSVGDFAHALIRHDPLGKPLLWSPFIQRPLHKRKGGQVRFSNDQTIELEKKFETQKYLSPPERKRLAKMLQLSERQVKTWFQNRRAKWRRLKQENPPSTGKREAEDSDTRRLSDAAARARELESGASTDSEELLDIEDEHQFTL</sequence>